<comment type="function">
    <text evidence="1">Located on the platform of the 30S subunit, it bridges several disparate RNA helices of the 16S rRNA. Forms part of the Shine-Dalgarno cleft in the 70S ribosome.</text>
</comment>
<comment type="subunit">
    <text evidence="1">Part of the 30S ribosomal subunit. Interacts with proteins S7 and S18. Binds to IF-3.</text>
</comment>
<comment type="similarity">
    <text evidence="1">Belongs to the universal ribosomal protein uS11 family.</text>
</comment>
<evidence type="ECO:0000255" key="1">
    <source>
        <dbReference type="HAMAP-Rule" id="MF_01310"/>
    </source>
</evidence>
<evidence type="ECO:0000305" key="2"/>
<feature type="chain" id="PRO_1000086216" description="Small ribosomal subunit protein uS11">
    <location>
        <begin position="1"/>
        <end position="129"/>
    </location>
</feature>
<name>RS11_STAAT</name>
<sequence>MARKQVSRKRRVKKNIENGVAHIRSTFNNTIVTITDEFGNALSWSSAGALGFKGSKKSTPFAAQMASETASKSAMEHGLKTVEVTVKGPGPGRESAIRALQSAGLEVTAIRDVTPVPHNGCRPPKRRRV</sequence>
<organism>
    <name type="scientific">Staphylococcus aureus (strain USA300 / TCH1516)</name>
    <dbReference type="NCBI Taxonomy" id="451516"/>
    <lineage>
        <taxon>Bacteria</taxon>
        <taxon>Bacillati</taxon>
        <taxon>Bacillota</taxon>
        <taxon>Bacilli</taxon>
        <taxon>Bacillales</taxon>
        <taxon>Staphylococcaceae</taxon>
        <taxon>Staphylococcus</taxon>
    </lineage>
</organism>
<gene>
    <name evidence="1" type="primary">rpsK</name>
    <name type="ordered locus">USA300HOU_2216</name>
</gene>
<keyword id="KW-0687">Ribonucleoprotein</keyword>
<keyword id="KW-0689">Ribosomal protein</keyword>
<keyword id="KW-0694">RNA-binding</keyword>
<keyword id="KW-0699">rRNA-binding</keyword>
<accession>A8Z332</accession>
<reference key="1">
    <citation type="journal article" date="2007" name="BMC Microbiol.">
        <title>Subtle genetic changes enhance virulence of methicillin resistant and sensitive Staphylococcus aureus.</title>
        <authorList>
            <person name="Highlander S.K."/>
            <person name="Hulten K.G."/>
            <person name="Qin X."/>
            <person name="Jiang H."/>
            <person name="Yerrapragada S."/>
            <person name="Mason E.O. Jr."/>
            <person name="Shang Y."/>
            <person name="Williams T.M."/>
            <person name="Fortunov R.M."/>
            <person name="Liu Y."/>
            <person name="Igboeli O."/>
            <person name="Petrosino J."/>
            <person name="Tirumalai M."/>
            <person name="Uzman A."/>
            <person name="Fox G.E."/>
            <person name="Cardenas A.M."/>
            <person name="Muzny D.M."/>
            <person name="Hemphill L."/>
            <person name="Ding Y."/>
            <person name="Dugan S."/>
            <person name="Blyth P.R."/>
            <person name="Buhay C.J."/>
            <person name="Dinh H.H."/>
            <person name="Hawes A.C."/>
            <person name="Holder M."/>
            <person name="Kovar C.L."/>
            <person name="Lee S.L."/>
            <person name="Liu W."/>
            <person name="Nazareth L.V."/>
            <person name="Wang Q."/>
            <person name="Zhou J."/>
            <person name="Kaplan S.L."/>
            <person name="Weinstock G.M."/>
        </authorList>
    </citation>
    <scope>NUCLEOTIDE SEQUENCE [LARGE SCALE GENOMIC DNA]</scope>
    <source>
        <strain>USA300 / TCH1516</strain>
    </source>
</reference>
<proteinExistence type="inferred from homology"/>
<dbReference type="EMBL" id="CP000730">
    <property type="protein sequence ID" value="ABX30209.1"/>
    <property type="molecule type" value="Genomic_DNA"/>
</dbReference>
<dbReference type="RefSeq" id="WP_000101625.1">
    <property type="nucleotide sequence ID" value="NC_010079.1"/>
</dbReference>
<dbReference type="SMR" id="A8Z332"/>
<dbReference type="GeneID" id="98346537"/>
<dbReference type="KEGG" id="sax:USA300HOU_2216"/>
<dbReference type="HOGENOM" id="CLU_072439_5_0_9"/>
<dbReference type="GO" id="GO:1990904">
    <property type="term" value="C:ribonucleoprotein complex"/>
    <property type="evidence" value="ECO:0007669"/>
    <property type="project" value="UniProtKB-KW"/>
</dbReference>
<dbReference type="GO" id="GO:0005840">
    <property type="term" value="C:ribosome"/>
    <property type="evidence" value="ECO:0007669"/>
    <property type="project" value="UniProtKB-KW"/>
</dbReference>
<dbReference type="GO" id="GO:0019843">
    <property type="term" value="F:rRNA binding"/>
    <property type="evidence" value="ECO:0007669"/>
    <property type="project" value="UniProtKB-UniRule"/>
</dbReference>
<dbReference type="GO" id="GO:0003735">
    <property type="term" value="F:structural constituent of ribosome"/>
    <property type="evidence" value="ECO:0007669"/>
    <property type="project" value="InterPro"/>
</dbReference>
<dbReference type="GO" id="GO:0006412">
    <property type="term" value="P:translation"/>
    <property type="evidence" value="ECO:0007669"/>
    <property type="project" value="UniProtKB-UniRule"/>
</dbReference>
<dbReference type="FunFam" id="3.30.420.80:FF:000001">
    <property type="entry name" value="30S ribosomal protein S11"/>
    <property type="match status" value="1"/>
</dbReference>
<dbReference type="Gene3D" id="3.30.420.80">
    <property type="entry name" value="Ribosomal protein S11"/>
    <property type="match status" value="1"/>
</dbReference>
<dbReference type="HAMAP" id="MF_01310">
    <property type="entry name" value="Ribosomal_uS11"/>
    <property type="match status" value="1"/>
</dbReference>
<dbReference type="InterPro" id="IPR001971">
    <property type="entry name" value="Ribosomal_uS11"/>
</dbReference>
<dbReference type="InterPro" id="IPR019981">
    <property type="entry name" value="Ribosomal_uS11_bac-type"/>
</dbReference>
<dbReference type="InterPro" id="IPR018102">
    <property type="entry name" value="Ribosomal_uS11_CS"/>
</dbReference>
<dbReference type="InterPro" id="IPR036967">
    <property type="entry name" value="Ribosomal_uS11_sf"/>
</dbReference>
<dbReference type="NCBIfam" id="NF003698">
    <property type="entry name" value="PRK05309.1"/>
    <property type="match status" value="1"/>
</dbReference>
<dbReference type="NCBIfam" id="TIGR03632">
    <property type="entry name" value="uS11_bact"/>
    <property type="match status" value="1"/>
</dbReference>
<dbReference type="PANTHER" id="PTHR11759">
    <property type="entry name" value="40S RIBOSOMAL PROTEIN S14/30S RIBOSOMAL PROTEIN S11"/>
    <property type="match status" value="1"/>
</dbReference>
<dbReference type="Pfam" id="PF00411">
    <property type="entry name" value="Ribosomal_S11"/>
    <property type="match status" value="1"/>
</dbReference>
<dbReference type="PIRSF" id="PIRSF002131">
    <property type="entry name" value="Ribosomal_S11"/>
    <property type="match status" value="1"/>
</dbReference>
<dbReference type="SUPFAM" id="SSF53137">
    <property type="entry name" value="Translational machinery components"/>
    <property type="match status" value="1"/>
</dbReference>
<dbReference type="PROSITE" id="PS00054">
    <property type="entry name" value="RIBOSOMAL_S11"/>
    <property type="match status" value="1"/>
</dbReference>
<protein>
    <recommendedName>
        <fullName evidence="1">Small ribosomal subunit protein uS11</fullName>
    </recommendedName>
    <alternativeName>
        <fullName evidence="2">30S ribosomal protein S11</fullName>
    </alternativeName>
</protein>